<sequence length="63" mass="7288">MVFQLVCSTCGKDISHERYKLIIRKKSLKDVLVSVKNECCRLKLSTQIEPQRNLTVQPLLDIN</sequence>
<protein>
    <recommendedName>
        <fullName>DNA-directed RNA polymerase 7 kDa subunit</fullName>
        <ecNumber>2.7.7.6</ecNumber>
    </recommendedName>
</protein>
<comment type="function">
    <text evidence="1">Part of the DNA-dependent RNA polymerase which catalyzes the transcription of viral DNA into RNA using the four ribonucleoside triphosphates as substrates. Responsible for the transcription of early, intermediate and late genes. DNA-dependent RNA polymerase associates with the early transcription factor (ETF), itself composed of OPG118 and OPG134, thereby allowing the early genes transcription. Late transcription, and probably also intermediate transcription, require newly synthesized RNA polymerase.</text>
</comment>
<comment type="catalytic activity">
    <reaction>
        <text>RNA(n) + a ribonucleoside 5'-triphosphate = RNA(n+1) + diphosphate</text>
        <dbReference type="Rhea" id="RHEA:21248"/>
        <dbReference type="Rhea" id="RHEA-COMP:14527"/>
        <dbReference type="Rhea" id="RHEA-COMP:17342"/>
        <dbReference type="ChEBI" id="CHEBI:33019"/>
        <dbReference type="ChEBI" id="CHEBI:61557"/>
        <dbReference type="ChEBI" id="CHEBI:140395"/>
        <dbReference type="EC" id="2.7.7.6"/>
    </reaction>
</comment>
<comment type="subunit">
    <text evidence="1">The DNA-dependent RNA polymerase (vRNAP) consists of eight subunits encoded by early viral genes and termed according to their apparent molecular masses Rpo147, Rpo132, Rpo35, Rpo30, Rpo22, Rpo19, Rpo18, and Rpo7. The same holoenzyme, with the addition of the transcription-specificity factor RAP94, is used for early gene expression.</text>
</comment>
<comment type="subcellular location">
    <subcellularLocation>
        <location evidence="1">Virion</location>
    </subcellularLocation>
    <text evidence="1">All the enzymes and other proteins required to synthesize early mRNAs are packaged within the virion core along with the DNA genome. This is necessary because viral early mRNAs are synthesized within minutes after virus entry into the cell and are extruded through pores in the core particle.</text>
</comment>
<comment type="induction">
    <text>Expressed in the early phase of the viral replicative cycle.</text>
</comment>
<comment type="similarity">
    <text evidence="2">Belongs to the poxviridae DNA-directed RNA polymerase 7 kDa subunit family.</text>
</comment>
<dbReference type="EC" id="2.7.7.6"/>
<dbReference type="EMBL" id="J03399">
    <property type="protein sequence ID" value="AAB59816.1"/>
    <property type="molecule type" value="Genomic_DNA"/>
</dbReference>
<dbReference type="PDB" id="8P0J">
    <property type="method" value="EM"/>
    <property type="resolution" value="2.39 A"/>
    <property type="chains" value="J=1-63"/>
</dbReference>
<dbReference type="PDB" id="8P0K">
    <property type="method" value="EM"/>
    <property type="resolution" value="2.64 A"/>
    <property type="chains" value="J=1-63"/>
</dbReference>
<dbReference type="PDB" id="8P0N">
    <property type="method" value="EM"/>
    <property type="resolution" value="2.58 A"/>
    <property type="chains" value="J=1-63"/>
</dbReference>
<dbReference type="PDB" id="8RQK">
    <property type="method" value="EM"/>
    <property type="resolution" value="2.65 A"/>
    <property type="chains" value="J=1-63"/>
</dbReference>
<dbReference type="PDBsum" id="8P0J"/>
<dbReference type="PDBsum" id="8P0K"/>
<dbReference type="PDBsum" id="8P0N"/>
<dbReference type="PDBsum" id="8RQK"/>
<dbReference type="EMDB" id="EMD-17334"/>
<dbReference type="EMDB" id="EMD-17335"/>
<dbReference type="EMDB" id="EMD-17336"/>
<dbReference type="EMDB" id="EMD-19442"/>
<dbReference type="SMR" id="P68315"/>
<dbReference type="GO" id="GO:0000428">
    <property type="term" value="C:DNA-directed RNA polymerase complex"/>
    <property type="evidence" value="ECO:0007669"/>
    <property type="project" value="UniProtKB-KW"/>
</dbReference>
<dbReference type="GO" id="GO:0044423">
    <property type="term" value="C:virion component"/>
    <property type="evidence" value="ECO:0007669"/>
    <property type="project" value="UniProtKB-KW"/>
</dbReference>
<dbReference type="GO" id="GO:0003677">
    <property type="term" value="F:DNA binding"/>
    <property type="evidence" value="ECO:0007669"/>
    <property type="project" value="InterPro"/>
</dbReference>
<dbReference type="GO" id="GO:0003899">
    <property type="term" value="F:DNA-directed RNA polymerase activity"/>
    <property type="evidence" value="ECO:0007669"/>
    <property type="project" value="UniProtKB-EC"/>
</dbReference>
<dbReference type="GO" id="GO:0006351">
    <property type="term" value="P:DNA-templated transcription"/>
    <property type="evidence" value="ECO:0007669"/>
    <property type="project" value="InterPro"/>
</dbReference>
<dbReference type="InterPro" id="IPR008448">
    <property type="entry name" value="RNA_pol_7kDa_chordopoxvir"/>
</dbReference>
<dbReference type="Pfam" id="PF05864">
    <property type="entry name" value="Chordopox_RPO7"/>
    <property type="match status" value="1"/>
</dbReference>
<accession>P68315</accession>
<accession>Q89560</accession>
<feature type="chain" id="PRO_0000099156" description="DNA-directed RNA polymerase 7 kDa subunit">
    <location>
        <begin position="1"/>
        <end position="63"/>
    </location>
</feature>
<organismHost>
    <name type="scientific">Homo sapiens</name>
    <name type="common">Human</name>
    <dbReference type="NCBI Taxonomy" id="9606"/>
</organismHost>
<organism>
    <name type="scientific">Vaccinia virus (strain Copenhagen)</name>
    <name type="common">VACV</name>
    <dbReference type="NCBI Taxonomy" id="10249"/>
    <lineage>
        <taxon>Viruses</taxon>
        <taxon>Varidnaviria</taxon>
        <taxon>Bamfordvirae</taxon>
        <taxon>Nucleocytoviricota</taxon>
        <taxon>Pokkesviricetes</taxon>
        <taxon>Chitovirales</taxon>
        <taxon>Poxviridae</taxon>
        <taxon>Chordopoxvirinae</taxon>
        <taxon>Orthopoxvirus</taxon>
        <taxon>Vaccinia virus</taxon>
    </lineage>
</organism>
<reference key="1">
    <citation type="journal article" date="1990" name="Virology">
        <title>The complete DNA sequence of vaccinia virus.</title>
        <authorList>
            <person name="Goebel S.J."/>
            <person name="Johnson G.P."/>
            <person name="Perkus M.E."/>
            <person name="Davis S.W."/>
            <person name="Winslow J.P."/>
            <person name="Paoletti E."/>
        </authorList>
    </citation>
    <scope>NUCLEOTIDE SEQUENCE [LARGE SCALE GENOMIC DNA]</scope>
</reference>
<reference key="2">
    <citation type="journal article" date="1990" name="Virology">
        <title>Appendix to 'The complete DNA sequence of vaccinia virus'.</title>
        <authorList>
            <person name="Goebel S.J."/>
            <person name="Johnson G.P."/>
            <person name="Perkus M.E."/>
            <person name="Davis S.W."/>
            <person name="Winslow J.P."/>
            <person name="Paoletti E."/>
        </authorList>
    </citation>
    <scope>NUCLEOTIDE SEQUENCE [LARGE SCALE GENOMIC DNA]</scope>
</reference>
<reference key="3">
    <citation type="journal article" date="2003" name="J. Gen. Virol.">
        <title>Vaccinia virus transcription.</title>
        <authorList>
            <person name="Broyles S.S."/>
        </authorList>
    </citation>
    <scope>REVIEW</scope>
</reference>
<keyword id="KW-0002">3D-structure</keyword>
<keyword id="KW-0240">DNA-directed RNA polymerase</keyword>
<keyword id="KW-0244">Early protein</keyword>
<keyword id="KW-0548">Nucleotidyltransferase</keyword>
<keyword id="KW-0804">Transcription</keyword>
<keyword id="KW-0808">Transferase</keyword>
<keyword id="KW-0946">Virion</keyword>
<name>RP07_VACCC</name>
<gene>
    <name type="primary">OPG090</name>
    <name type="synonym">RPO7</name>
    <name type="ORF">G5.5R</name>
</gene>
<evidence type="ECO:0000250" key="1">
    <source>
        <dbReference type="UniProtKB" id="P68317"/>
    </source>
</evidence>
<evidence type="ECO:0000305" key="2"/>
<proteinExistence type="evidence at protein level"/>